<feature type="chain" id="PRO_0000276828" description="Large ribosomal subunit protein bL36c">
    <location>
        <begin position="1"/>
        <end position="37"/>
    </location>
</feature>
<proteinExistence type="inferred from homology"/>
<organism>
    <name type="scientific">Pelargonium hortorum</name>
    <name type="common">Common geranium</name>
    <name type="synonym">Pelargonium inquinans x Pelargonium zonale</name>
    <dbReference type="NCBI Taxonomy" id="4031"/>
    <lineage>
        <taxon>Eukaryota</taxon>
        <taxon>Viridiplantae</taxon>
        <taxon>Streptophyta</taxon>
        <taxon>Embryophyta</taxon>
        <taxon>Tracheophyta</taxon>
        <taxon>Spermatophyta</taxon>
        <taxon>Magnoliopsida</taxon>
        <taxon>eudicotyledons</taxon>
        <taxon>Gunneridae</taxon>
        <taxon>Pentapetalae</taxon>
        <taxon>rosids</taxon>
        <taxon>malvids</taxon>
        <taxon>Geraniales</taxon>
        <taxon>Geraniaceae</taxon>
        <taxon>Pelargonium</taxon>
    </lineage>
</organism>
<sequence>MKIRASVRKICTKCQLIRRKGRIRVICSNPRHKQRQR</sequence>
<dbReference type="EMBL" id="DQ897681">
    <property type="protein sequence ID" value="ABI17297.1"/>
    <property type="molecule type" value="Genomic_DNA"/>
</dbReference>
<dbReference type="EMBL" id="DQ897681">
    <property type="protein sequence ID" value="ABI17343.1"/>
    <property type="molecule type" value="Genomic_DNA"/>
</dbReference>
<dbReference type="SMR" id="Q06FN0"/>
<dbReference type="GO" id="GO:0009507">
    <property type="term" value="C:chloroplast"/>
    <property type="evidence" value="ECO:0007669"/>
    <property type="project" value="UniProtKB-SubCell"/>
</dbReference>
<dbReference type="GO" id="GO:1990904">
    <property type="term" value="C:ribonucleoprotein complex"/>
    <property type="evidence" value="ECO:0007669"/>
    <property type="project" value="UniProtKB-KW"/>
</dbReference>
<dbReference type="GO" id="GO:0005840">
    <property type="term" value="C:ribosome"/>
    <property type="evidence" value="ECO:0007669"/>
    <property type="project" value="UniProtKB-KW"/>
</dbReference>
<dbReference type="GO" id="GO:0003735">
    <property type="term" value="F:structural constituent of ribosome"/>
    <property type="evidence" value="ECO:0007669"/>
    <property type="project" value="InterPro"/>
</dbReference>
<dbReference type="GO" id="GO:0006412">
    <property type="term" value="P:translation"/>
    <property type="evidence" value="ECO:0007669"/>
    <property type="project" value="UniProtKB-UniRule"/>
</dbReference>
<dbReference type="HAMAP" id="MF_00251">
    <property type="entry name" value="Ribosomal_bL36"/>
    <property type="match status" value="1"/>
</dbReference>
<dbReference type="InterPro" id="IPR000473">
    <property type="entry name" value="Ribosomal_bL36"/>
</dbReference>
<dbReference type="InterPro" id="IPR035977">
    <property type="entry name" value="Ribosomal_bL36_sp"/>
</dbReference>
<dbReference type="NCBIfam" id="TIGR01022">
    <property type="entry name" value="rpmJ_bact"/>
    <property type="match status" value="1"/>
</dbReference>
<dbReference type="PANTHER" id="PTHR42888">
    <property type="entry name" value="50S RIBOSOMAL PROTEIN L36, CHLOROPLASTIC"/>
    <property type="match status" value="1"/>
</dbReference>
<dbReference type="PANTHER" id="PTHR42888:SF1">
    <property type="entry name" value="LARGE RIBOSOMAL SUBUNIT PROTEIN BL36C"/>
    <property type="match status" value="1"/>
</dbReference>
<dbReference type="Pfam" id="PF00444">
    <property type="entry name" value="Ribosomal_L36"/>
    <property type="match status" value="1"/>
</dbReference>
<dbReference type="SUPFAM" id="SSF57840">
    <property type="entry name" value="Ribosomal protein L36"/>
    <property type="match status" value="1"/>
</dbReference>
<dbReference type="PROSITE" id="PS00828">
    <property type="entry name" value="RIBOSOMAL_L36"/>
    <property type="match status" value="1"/>
</dbReference>
<geneLocation type="chloroplast"/>
<evidence type="ECO:0000255" key="1">
    <source>
        <dbReference type="HAMAP-Rule" id="MF_00251"/>
    </source>
</evidence>
<evidence type="ECO:0000305" key="2"/>
<name>RK36_PELHO</name>
<gene>
    <name evidence="1" type="primary">rpl36-A</name>
</gene>
<gene>
    <name evidence="1" type="primary">rpl36-B</name>
</gene>
<protein>
    <recommendedName>
        <fullName evidence="1">Large ribosomal subunit protein bL36c</fullName>
    </recommendedName>
    <alternativeName>
        <fullName evidence="2">50S ribosomal protein L36, chloroplastic</fullName>
    </alternativeName>
</protein>
<accession>Q06FN0</accession>
<reference key="1">
    <citation type="journal article" date="2006" name="Mol. Biol. Evol.">
        <title>The complete chloroplast genome sequence of Pelargonium x hortorum: organization and evolution of the largest and most highly rearranged chloroplast genome of land plants.</title>
        <authorList>
            <person name="Chumley T.W."/>
            <person name="Palmer J.D."/>
            <person name="Mower J.P."/>
            <person name="Fourcade H.M."/>
            <person name="Calie P.J."/>
            <person name="Boore J.L."/>
            <person name="Jansen R.K."/>
        </authorList>
    </citation>
    <scope>NUCLEOTIDE SEQUENCE [LARGE SCALE GENOMIC DNA]</scope>
    <source>
        <strain>cv. Ringo White</strain>
    </source>
</reference>
<keyword id="KW-0150">Chloroplast</keyword>
<keyword id="KW-0934">Plastid</keyword>
<keyword id="KW-0687">Ribonucleoprotein</keyword>
<keyword id="KW-0689">Ribosomal protein</keyword>
<comment type="subcellular location">
    <subcellularLocation>
        <location>Plastid</location>
        <location>Chloroplast</location>
    </subcellularLocation>
</comment>
<comment type="similarity">
    <text evidence="1">Belongs to the bacterial ribosomal protein bL36 family.</text>
</comment>